<reference key="1">
    <citation type="journal article" date="2004" name="Nucleic Acids Res.">
        <title>Genome sequence of Symbiobacterium thermophilum, an uncultivable bacterium that depends on microbial commensalism.</title>
        <authorList>
            <person name="Ueda K."/>
            <person name="Yamashita A."/>
            <person name="Ishikawa J."/>
            <person name="Shimada M."/>
            <person name="Watsuji T."/>
            <person name="Morimura K."/>
            <person name="Ikeda H."/>
            <person name="Hattori M."/>
            <person name="Beppu T."/>
        </authorList>
    </citation>
    <scope>NUCLEOTIDE SEQUENCE [LARGE SCALE GENOMIC DNA]</scope>
    <source>
        <strain>DSM 24528 / JCM 14929 / IAM 14863 / T</strain>
    </source>
</reference>
<comment type="function">
    <text evidence="1">Involved in the binding of tRNA to the ribosomes.</text>
</comment>
<comment type="subunit">
    <text evidence="1">Part of the 30S ribosomal subunit.</text>
</comment>
<comment type="similarity">
    <text evidence="1">Belongs to the universal ribosomal protein uS10 family.</text>
</comment>
<name>RS10_SYMTH</name>
<gene>
    <name evidence="1" type="primary">rpsJ</name>
    <name type="ordered locus">STH3076</name>
</gene>
<sequence length="102" mass="11349">MAKQKIRIRLRAFDHKILDSSAAKIVETAIRTGATVSGPIPLPTEKSIYTILTAPNGEKDIREQFEMRTHKRLIDIVEPGSKTVEALMKLDLPAGVDIEIKL</sequence>
<protein>
    <recommendedName>
        <fullName evidence="1">Small ribosomal subunit protein uS10</fullName>
    </recommendedName>
    <alternativeName>
        <fullName evidence="2">30S ribosomal protein S10</fullName>
    </alternativeName>
</protein>
<proteinExistence type="inferred from homology"/>
<accession>Q67JU2</accession>
<evidence type="ECO:0000255" key="1">
    <source>
        <dbReference type="HAMAP-Rule" id="MF_00508"/>
    </source>
</evidence>
<evidence type="ECO:0000305" key="2"/>
<feature type="chain" id="PRO_0000237104" description="Small ribosomal subunit protein uS10">
    <location>
        <begin position="1"/>
        <end position="102"/>
    </location>
</feature>
<keyword id="KW-1185">Reference proteome</keyword>
<keyword id="KW-0687">Ribonucleoprotein</keyword>
<keyword id="KW-0689">Ribosomal protein</keyword>
<dbReference type="EMBL" id="AP006840">
    <property type="protein sequence ID" value="BAD42058.1"/>
    <property type="molecule type" value="Genomic_DNA"/>
</dbReference>
<dbReference type="RefSeq" id="WP_011197191.1">
    <property type="nucleotide sequence ID" value="NC_006177.1"/>
</dbReference>
<dbReference type="SMR" id="Q67JU2"/>
<dbReference type="STRING" id="292459.STH3076"/>
<dbReference type="KEGG" id="sth:STH3076"/>
<dbReference type="eggNOG" id="COG0051">
    <property type="taxonomic scope" value="Bacteria"/>
</dbReference>
<dbReference type="HOGENOM" id="CLU_122625_1_3_9"/>
<dbReference type="OrthoDB" id="9804464at2"/>
<dbReference type="Proteomes" id="UP000000417">
    <property type="component" value="Chromosome"/>
</dbReference>
<dbReference type="GO" id="GO:1990904">
    <property type="term" value="C:ribonucleoprotein complex"/>
    <property type="evidence" value="ECO:0007669"/>
    <property type="project" value="UniProtKB-KW"/>
</dbReference>
<dbReference type="GO" id="GO:0005840">
    <property type="term" value="C:ribosome"/>
    <property type="evidence" value="ECO:0007669"/>
    <property type="project" value="UniProtKB-KW"/>
</dbReference>
<dbReference type="GO" id="GO:0003735">
    <property type="term" value="F:structural constituent of ribosome"/>
    <property type="evidence" value="ECO:0007669"/>
    <property type="project" value="InterPro"/>
</dbReference>
<dbReference type="GO" id="GO:0000049">
    <property type="term" value="F:tRNA binding"/>
    <property type="evidence" value="ECO:0007669"/>
    <property type="project" value="UniProtKB-UniRule"/>
</dbReference>
<dbReference type="GO" id="GO:0006412">
    <property type="term" value="P:translation"/>
    <property type="evidence" value="ECO:0007669"/>
    <property type="project" value="UniProtKB-UniRule"/>
</dbReference>
<dbReference type="FunFam" id="3.30.70.600:FF:000001">
    <property type="entry name" value="30S ribosomal protein S10"/>
    <property type="match status" value="1"/>
</dbReference>
<dbReference type="Gene3D" id="3.30.70.600">
    <property type="entry name" value="Ribosomal protein S10 domain"/>
    <property type="match status" value="1"/>
</dbReference>
<dbReference type="HAMAP" id="MF_00508">
    <property type="entry name" value="Ribosomal_uS10"/>
    <property type="match status" value="1"/>
</dbReference>
<dbReference type="InterPro" id="IPR001848">
    <property type="entry name" value="Ribosomal_uS10"/>
</dbReference>
<dbReference type="InterPro" id="IPR018268">
    <property type="entry name" value="Ribosomal_uS10_CS"/>
</dbReference>
<dbReference type="InterPro" id="IPR027486">
    <property type="entry name" value="Ribosomal_uS10_dom"/>
</dbReference>
<dbReference type="InterPro" id="IPR036838">
    <property type="entry name" value="Ribosomal_uS10_dom_sf"/>
</dbReference>
<dbReference type="NCBIfam" id="NF001861">
    <property type="entry name" value="PRK00596.1"/>
    <property type="match status" value="1"/>
</dbReference>
<dbReference type="NCBIfam" id="TIGR01049">
    <property type="entry name" value="rpsJ_bact"/>
    <property type="match status" value="1"/>
</dbReference>
<dbReference type="PANTHER" id="PTHR11700">
    <property type="entry name" value="30S RIBOSOMAL PROTEIN S10 FAMILY MEMBER"/>
    <property type="match status" value="1"/>
</dbReference>
<dbReference type="Pfam" id="PF00338">
    <property type="entry name" value="Ribosomal_S10"/>
    <property type="match status" value="1"/>
</dbReference>
<dbReference type="PRINTS" id="PR00971">
    <property type="entry name" value="RIBOSOMALS10"/>
</dbReference>
<dbReference type="SMART" id="SM01403">
    <property type="entry name" value="Ribosomal_S10"/>
    <property type="match status" value="1"/>
</dbReference>
<dbReference type="SUPFAM" id="SSF54999">
    <property type="entry name" value="Ribosomal protein S10"/>
    <property type="match status" value="1"/>
</dbReference>
<dbReference type="PROSITE" id="PS00361">
    <property type="entry name" value="RIBOSOMAL_S10"/>
    <property type="match status" value="1"/>
</dbReference>
<organism>
    <name type="scientific">Symbiobacterium thermophilum (strain DSM 24528 / JCM 14929 / IAM 14863 / T)</name>
    <dbReference type="NCBI Taxonomy" id="292459"/>
    <lineage>
        <taxon>Bacteria</taxon>
        <taxon>Bacillati</taxon>
        <taxon>Bacillota</taxon>
        <taxon>Clostridia</taxon>
        <taxon>Eubacteriales</taxon>
        <taxon>Symbiobacteriaceae</taxon>
        <taxon>Symbiobacterium</taxon>
    </lineage>
</organism>